<reference key="1">
    <citation type="journal article" date="2004" name="Proc. Natl. Acad. Sci. U.S.A.">
        <title>The louse-borne human pathogen Bartonella quintana is a genomic derivative of the zoonotic agent Bartonella henselae.</title>
        <authorList>
            <person name="Alsmark U.C.M."/>
            <person name="Frank A.C."/>
            <person name="Karlberg E.O."/>
            <person name="Legault B.-A."/>
            <person name="Ardell D.H."/>
            <person name="Canbaeck B."/>
            <person name="Eriksson A.-S."/>
            <person name="Naeslund A.K."/>
            <person name="Handley S.A."/>
            <person name="Huvet M."/>
            <person name="La Scola B."/>
            <person name="Holmberg M."/>
            <person name="Andersson S.G.E."/>
        </authorList>
    </citation>
    <scope>NUCLEOTIDE SEQUENCE [LARGE SCALE GENOMIC DNA]</scope>
    <source>
        <strain>Toulouse</strain>
    </source>
</reference>
<accession>Q6FZD7</accession>
<name>RL6_BARQU</name>
<protein>
    <recommendedName>
        <fullName evidence="1">Large ribosomal subunit protein uL6</fullName>
    </recommendedName>
    <alternativeName>
        <fullName evidence="2">50S ribosomal protein L6</fullName>
    </alternativeName>
</protein>
<evidence type="ECO:0000255" key="1">
    <source>
        <dbReference type="HAMAP-Rule" id="MF_01365"/>
    </source>
</evidence>
<evidence type="ECO:0000305" key="2"/>
<sequence>MSRIGKKPISVPSGVTATVEGQLVKAKGPKGELSYIVNDEVLVKFEGNVISVSPRDQSKDARSKWGMSRSMIENIFCGVKNGFEKKLEINGVGYRAALQGKDVQLSLGFSHDVIYKVPPGITVTVPKPTEIVISGIDKQQVGQVAAEIREYRRPEPYKGKGVKHADECIFRKEGKKK</sequence>
<organism>
    <name type="scientific">Bartonella quintana (strain Toulouse)</name>
    <name type="common">Rochalimaea quintana</name>
    <dbReference type="NCBI Taxonomy" id="283165"/>
    <lineage>
        <taxon>Bacteria</taxon>
        <taxon>Pseudomonadati</taxon>
        <taxon>Pseudomonadota</taxon>
        <taxon>Alphaproteobacteria</taxon>
        <taxon>Hyphomicrobiales</taxon>
        <taxon>Bartonellaceae</taxon>
        <taxon>Bartonella</taxon>
    </lineage>
</organism>
<feature type="chain" id="PRO_0000265217" description="Large ribosomal subunit protein uL6">
    <location>
        <begin position="1"/>
        <end position="177"/>
    </location>
</feature>
<dbReference type="EMBL" id="BX897700">
    <property type="protein sequence ID" value="CAF26291.1"/>
    <property type="molecule type" value="Genomic_DNA"/>
</dbReference>
<dbReference type="RefSeq" id="WP_011179538.1">
    <property type="nucleotide sequence ID" value="NC_005955.1"/>
</dbReference>
<dbReference type="SMR" id="Q6FZD7"/>
<dbReference type="KEGG" id="bqu:BQ08080"/>
<dbReference type="eggNOG" id="COG0097">
    <property type="taxonomic scope" value="Bacteria"/>
</dbReference>
<dbReference type="HOGENOM" id="CLU_065464_1_2_5"/>
<dbReference type="OrthoDB" id="9805007at2"/>
<dbReference type="Proteomes" id="UP000000597">
    <property type="component" value="Chromosome"/>
</dbReference>
<dbReference type="GO" id="GO:0022625">
    <property type="term" value="C:cytosolic large ribosomal subunit"/>
    <property type="evidence" value="ECO:0007669"/>
    <property type="project" value="TreeGrafter"/>
</dbReference>
<dbReference type="GO" id="GO:0019843">
    <property type="term" value="F:rRNA binding"/>
    <property type="evidence" value="ECO:0007669"/>
    <property type="project" value="UniProtKB-UniRule"/>
</dbReference>
<dbReference type="GO" id="GO:0003735">
    <property type="term" value="F:structural constituent of ribosome"/>
    <property type="evidence" value="ECO:0007669"/>
    <property type="project" value="InterPro"/>
</dbReference>
<dbReference type="GO" id="GO:0002181">
    <property type="term" value="P:cytoplasmic translation"/>
    <property type="evidence" value="ECO:0007669"/>
    <property type="project" value="TreeGrafter"/>
</dbReference>
<dbReference type="FunFam" id="3.90.930.12:FF:000001">
    <property type="entry name" value="50S ribosomal protein L6"/>
    <property type="match status" value="1"/>
</dbReference>
<dbReference type="Gene3D" id="3.90.930.12">
    <property type="entry name" value="Ribosomal protein L6, alpha-beta domain"/>
    <property type="match status" value="2"/>
</dbReference>
<dbReference type="HAMAP" id="MF_01365_B">
    <property type="entry name" value="Ribosomal_uL6_B"/>
    <property type="match status" value="1"/>
</dbReference>
<dbReference type="InterPro" id="IPR000702">
    <property type="entry name" value="Ribosomal_uL6-like"/>
</dbReference>
<dbReference type="InterPro" id="IPR036789">
    <property type="entry name" value="Ribosomal_uL6-like_a/b-dom_sf"/>
</dbReference>
<dbReference type="InterPro" id="IPR020040">
    <property type="entry name" value="Ribosomal_uL6_a/b-dom"/>
</dbReference>
<dbReference type="InterPro" id="IPR019906">
    <property type="entry name" value="Ribosomal_uL6_bac-type"/>
</dbReference>
<dbReference type="InterPro" id="IPR002358">
    <property type="entry name" value="Ribosomal_uL6_CS"/>
</dbReference>
<dbReference type="NCBIfam" id="TIGR03654">
    <property type="entry name" value="L6_bact"/>
    <property type="match status" value="1"/>
</dbReference>
<dbReference type="PANTHER" id="PTHR11655">
    <property type="entry name" value="60S/50S RIBOSOMAL PROTEIN L6/L9"/>
    <property type="match status" value="1"/>
</dbReference>
<dbReference type="PANTHER" id="PTHR11655:SF14">
    <property type="entry name" value="LARGE RIBOSOMAL SUBUNIT PROTEIN UL6M"/>
    <property type="match status" value="1"/>
</dbReference>
<dbReference type="Pfam" id="PF00347">
    <property type="entry name" value="Ribosomal_L6"/>
    <property type="match status" value="2"/>
</dbReference>
<dbReference type="PIRSF" id="PIRSF002162">
    <property type="entry name" value="Ribosomal_L6"/>
    <property type="match status" value="1"/>
</dbReference>
<dbReference type="PRINTS" id="PR00059">
    <property type="entry name" value="RIBOSOMALL6"/>
</dbReference>
<dbReference type="SUPFAM" id="SSF56053">
    <property type="entry name" value="Ribosomal protein L6"/>
    <property type="match status" value="2"/>
</dbReference>
<dbReference type="PROSITE" id="PS00525">
    <property type="entry name" value="RIBOSOMAL_L6_1"/>
    <property type="match status" value="1"/>
</dbReference>
<gene>
    <name evidence="1" type="primary">rplF</name>
    <name type="ordered locus">BQ08080</name>
</gene>
<comment type="function">
    <text evidence="1">This protein binds to the 23S rRNA, and is important in its secondary structure. It is located near the subunit interface in the base of the L7/L12 stalk, and near the tRNA binding site of the peptidyltransferase center.</text>
</comment>
<comment type="subunit">
    <text evidence="1">Part of the 50S ribosomal subunit.</text>
</comment>
<comment type="similarity">
    <text evidence="1">Belongs to the universal ribosomal protein uL6 family.</text>
</comment>
<keyword id="KW-0687">Ribonucleoprotein</keyword>
<keyword id="KW-0689">Ribosomal protein</keyword>
<keyword id="KW-0694">RNA-binding</keyword>
<keyword id="KW-0699">rRNA-binding</keyword>
<proteinExistence type="inferred from homology"/>